<keyword id="KW-0249">Electron transport</keyword>
<keyword id="KW-0472">Membrane</keyword>
<keyword id="KW-0496">Mitochondrion</keyword>
<keyword id="KW-0999">Mitochondrion inner membrane</keyword>
<keyword id="KW-0520">NAD</keyword>
<keyword id="KW-1185">Reference proteome</keyword>
<keyword id="KW-0679">Respiratory chain</keyword>
<keyword id="KW-1278">Translocase</keyword>
<keyword id="KW-0812">Transmembrane</keyword>
<keyword id="KW-1133">Transmembrane helix</keyword>
<keyword id="KW-0813">Transport</keyword>
<keyword id="KW-0830">Ubiquinone</keyword>
<dbReference type="EC" id="7.1.1.2" evidence="1"/>
<dbReference type="EMBL" id="X97707">
    <property type="protein sequence ID" value="CAA66284.1"/>
    <property type="molecule type" value="Genomic_DNA"/>
</dbReference>
<dbReference type="RefSeq" id="NP_007836.1">
    <property type="nucleotide sequence ID" value="NC_002083.1"/>
</dbReference>
<dbReference type="SMR" id="P92691"/>
<dbReference type="FunCoup" id="P92691">
    <property type="interactions" value="261"/>
</dbReference>
<dbReference type="STRING" id="9601.ENSPPYP00000023440"/>
<dbReference type="Ensembl" id="ENSPPYT00000024428.2">
    <property type="protein sequence ID" value="ENSPPYP00000023440.2"/>
    <property type="gene ID" value="ENSPPYG00000020949.2"/>
</dbReference>
<dbReference type="GeneID" id="808478"/>
<dbReference type="KEGG" id="pon:808478"/>
<dbReference type="CTD" id="4536"/>
<dbReference type="eggNOG" id="KOG4668">
    <property type="taxonomic scope" value="Eukaryota"/>
</dbReference>
<dbReference type="GeneTree" id="ENSGT00730000111348"/>
<dbReference type="InParanoid" id="P92691"/>
<dbReference type="OMA" id="HFWVPEV"/>
<dbReference type="Proteomes" id="UP000001595">
    <property type="component" value="Mitochondrion"/>
</dbReference>
<dbReference type="GO" id="GO:0005743">
    <property type="term" value="C:mitochondrial inner membrane"/>
    <property type="evidence" value="ECO:0000250"/>
    <property type="project" value="UniProtKB"/>
</dbReference>
<dbReference type="GO" id="GO:0045271">
    <property type="term" value="C:respiratory chain complex I"/>
    <property type="evidence" value="ECO:0007669"/>
    <property type="project" value="Ensembl"/>
</dbReference>
<dbReference type="GO" id="GO:0008137">
    <property type="term" value="F:NADH dehydrogenase (ubiquinone) activity"/>
    <property type="evidence" value="ECO:0007669"/>
    <property type="project" value="UniProtKB-EC"/>
</dbReference>
<dbReference type="GO" id="GO:0006120">
    <property type="term" value="P:mitochondrial electron transport, NADH to ubiquinone"/>
    <property type="evidence" value="ECO:0007669"/>
    <property type="project" value="Ensembl"/>
</dbReference>
<dbReference type="GO" id="GO:0032981">
    <property type="term" value="P:mitochondrial respiratory chain complex I assembly"/>
    <property type="evidence" value="ECO:0007669"/>
    <property type="project" value="Ensembl"/>
</dbReference>
<dbReference type="GO" id="GO:0072593">
    <property type="term" value="P:reactive oxygen species metabolic process"/>
    <property type="evidence" value="ECO:0007669"/>
    <property type="project" value="Ensembl"/>
</dbReference>
<dbReference type="InterPro" id="IPR050175">
    <property type="entry name" value="Complex_I_Subunit_2"/>
</dbReference>
<dbReference type="InterPro" id="IPR010933">
    <property type="entry name" value="NADH_DH_su2_C"/>
</dbReference>
<dbReference type="InterPro" id="IPR003917">
    <property type="entry name" value="NADH_UbQ_OxRdtase_chain2"/>
</dbReference>
<dbReference type="InterPro" id="IPR001750">
    <property type="entry name" value="ND/Mrp_TM"/>
</dbReference>
<dbReference type="PANTHER" id="PTHR46552">
    <property type="entry name" value="NADH-UBIQUINONE OXIDOREDUCTASE CHAIN 2"/>
    <property type="match status" value="1"/>
</dbReference>
<dbReference type="PANTHER" id="PTHR46552:SF1">
    <property type="entry name" value="NADH-UBIQUINONE OXIDOREDUCTASE CHAIN 2"/>
    <property type="match status" value="1"/>
</dbReference>
<dbReference type="Pfam" id="PF06444">
    <property type="entry name" value="NADH_dehy_S2_C"/>
    <property type="match status" value="1"/>
</dbReference>
<dbReference type="Pfam" id="PF00361">
    <property type="entry name" value="Proton_antipo_M"/>
    <property type="match status" value="1"/>
</dbReference>
<dbReference type="PRINTS" id="PR01436">
    <property type="entry name" value="NADHDHGNASE2"/>
</dbReference>
<accession>P92691</accession>
<evidence type="ECO:0000250" key="1">
    <source>
        <dbReference type="UniProtKB" id="P03891"/>
    </source>
</evidence>
<evidence type="ECO:0000250" key="2">
    <source>
        <dbReference type="UniProtKB" id="P03892"/>
    </source>
</evidence>
<evidence type="ECO:0000255" key="3"/>
<evidence type="ECO:0000305" key="4"/>
<sequence length="347" mass="38619">MNPLAQPIIYPTIFTGTLITALSSHWFFAWLGLEMNMLAFIPVLTKKTSPRSTEAAIKYFLTQATASMILLMAILYNNMLSGQWTTTNTTNPYSSLMIVTALAMKLGMAPFHFWVPEVTQGVPLTSGLLLLTWQKLAPISIMYQMSSSVDTNILLTLSILSILVGGWGGLNQTQLRKILAYSSITHMGWMMAVLPYNPDITILNLIIYIILTTTAFLILDLNSSVTILMLTRTWNKLTWLMPLIPSTLLSLGGLPPLTGFLPKWAIIEEFAKNGNLITPTIMAIITLLNLYFYVRLIYATSITLLPMSNNAKMKWQFENTKPTPLLPTLTILTTLLLPISPLILSIS</sequence>
<organism>
    <name type="scientific">Pongo abelii</name>
    <name type="common">Sumatran orangutan</name>
    <name type="synonym">Pongo pygmaeus abelii</name>
    <dbReference type="NCBI Taxonomy" id="9601"/>
    <lineage>
        <taxon>Eukaryota</taxon>
        <taxon>Metazoa</taxon>
        <taxon>Chordata</taxon>
        <taxon>Craniata</taxon>
        <taxon>Vertebrata</taxon>
        <taxon>Euteleostomi</taxon>
        <taxon>Mammalia</taxon>
        <taxon>Eutheria</taxon>
        <taxon>Euarchontoglires</taxon>
        <taxon>Primates</taxon>
        <taxon>Haplorrhini</taxon>
        <taxon>Catarrhini</taxon>
        <taxon>Hominidae</taxon>
        <taxon>Pongo</taxon>
    </lineage>
</organism>
<protein>
    <recommendedName>
        <fullName evidence="1">NADH-ubiquinone oxidoreductase chain 2</fullName>
        <ecNumber evidence="1">7.1.1.2</ecNumber>
    </recommendedName>
    <alternativeName>
        <fullName>NADH dehydrogenase subunit 2</fullName>
    </alternativeName>
</protein>
<comment type="function">
    <text evidence="1">Core subunit of the mitochondrial membrane respiratory chain NADH dehydrogenase (Complex I) which catalyzes electron transfer from NADH through the respiratory chain, using ubiquinone as an electron acceptor. Essential for the catalytic activity and assembly of complex I.</text>
</comment>
<comment type="catalytic activity">
    <reaction evidence="1">
        <text>a ubiquinone + NADH + 5 H(+)(in) = a ubiquinol + NAD(+) + 4 H(+)(out)</text>
        <dbReference type="Rhea" id="RHEA:29091"/>
        <dbReference type="Rhea" id="RHEA-COMP:9565"/>
        <dbReference type="Rhea" id="RHEA-COMP:9566"/>
        <dbReference type="ChEBI" id="CHEBI:15378"/>
        <dbReference type="ChEBI" id="CHEBI:16389"/>
        <dbReference type="ChEBI" id="CHEBI:17976"/>
        <dbReference type="ChEBI" id="CHEBI:57540"/>
        <dbReference type="ChEBI" id="CHEBI:57945"/>
        <dbReference type="EC" id="7.1.1.2"/>
    </reaction>
</comment>
<comment type="subunit">
    <text evidence="1 2">Core subunit of respiratory chain NADH dehydrogenase (Complex I) which is composed of 45 different subunits. Interacts with TMEM242 (By similarity).</text>
</comment>
<comment type="subcellular location">
    <subcellularLocation>
        <location evidence="2">Mitochondrion inner membrane</location>
        <topology evidence="3">Multi-pass membrane protein</topology>
    </subcellularLocation>
</comment>
<comment type="similarity">
    <text evidence="4">Belongs to the complex I subunit 2 family.</text>
</comment>
<reference key="1">
    <citation type="journal article" date="1996" name="J. Mol. Evol.">
        <title>The mitochondrial DNA molecule of Sumatran orangutan and a molecular proposal for two (Bornean and Sumatran) species of orangutan.</title>
        <authorList>
            <person name="Xu X."/>
            <person name="Arnason U."/>
        </authorList>
    </citation>
    <scope>NUCLEOTIDE SEQUENCE [LARGE SCALE GENOMIC DNA]</scope>
</reference>
<gene>
    <name evidence="1" type="primary">MT-ND2</name>
    <name type="synonym">MTND2</name>
    <name type="synonym">NADH2</name>
    <name type="synonym">ND2</name>
</gene>
<proteinExistence type="inferred from homology"/>
<name>NU2M_PONAB</name>
<feature type="chain" id="PRO_0000117629" description="NADH-ubiquinone oxidoreductase chain 2">
    <location>
        <begin position="1"/>
        <end position="347"/>
    </location>
</feature>
<feature type="transmembrane region" description="Helical" evidence="3">
    <location>
        <begin position="13"/>
        <end position="33"/>
    </location>
</feature>
<feature type="transmembrane region" description="Helical" evidence="3">
    <location>
        <begin position="55"/>
        <end position="75"/>
    </location>
</feature>
<feature type="transmembrane region" description="Helical" evidence="3">
    <location>
        <begin position="96"/>
        <end position="116"/>
    </location>
</feature>
<feature type="transmembrane region" description="Helical" evidence="3">
    <location>
        <begin position="122"/>
        <end position="142"/>
    </location>
</feature>
<feature type="transmembrane region" description="Helical" evidence="3">
    <location>
        <begin position="151"/>
        <end position="171"/>
    </location>
</feature>
<feature type="transmembrane region" description="Helical" evidence="3">
    <location>
        <begin position="178"/>
        <end position="198"/>
    </location>
</feature>
<feature type="transmembrane region" description="Helical" evidence="3">
    <location>
        <begin position="199"/>
        <end position="219"/>
    </location>
</feature>
<feature type="transmembrane region" description="Helical" evidence="3">
    <location>
        <begin position="237"/>
        <end position="257"/>
    </location>
</feature>
<feature type="transmembrane region" description="Helical" evidence="3">
    <location>
        <begin position="274"/>
        <end position="294"/>
    </location>
</feature>
<feature type="transmembrane region" description="Helical" evidence="3">
    <location>
        <begin position="326"/>
        <end position="346"/>
    </location>
</feature>
<geneLocation type="mitochondrion"/>